<reference key="1">
    <citation type="submission" date="2009-10" db="EMBL/GenBank/DDBJ databases">
        <title>Complete sequence of Halothiobacillus neapolitanus c2.</title>
        <authorList>
            <consortium name="US DOE Joint Genome Institute"/>
            <person name="Lucas S."/>
            <person name="Copeland A."/>
            <person name="Lapidus A."/>
            <person name="Glavina del Rio T."/>
            <person name="Tice H."/>
            <person name="Bruce D."/>
            <person name="Goodwin L."/>
            <person name="Pitluck S."/>
            <person name="Davenport K."/>
            <person name="Brettin T."/>
            <person name="Detter J.C."/>
            <person name="Han C."/>
            <person name="Tapia R."/>
            <person name="Larimer F."/>
            <person name="Land M."/>
            <person name="Hauser L."/>
            <person name="Kyrpides N."/>
            <person name="Mikhailova N."/>
            <person name="Kerfeld C."/>
            <person name="Cannon G."/>
            <person name="Heinhort S."/>
        </authorList>
    </citation>
    <scope>NUCLEOTIDE SEQUENCE [LARGE SCALE GENOMIC DNA]</scope>
    <source>
        <strain>ATCC 23641 / c2</strain>
    </source>
</reference>
<reference key="2">
    <citation type="journal article" date="1987" name="Arch. Microbiol.">
        <title>Energetic aspects of CO2 uptake in Thiobacillus neapolitanus.</title>
        <authorList>
            <person name="Holthuijzen Y.A."/>
            <person name="van Dissel-Emiliani F.F.M."/>
            <person name="Kuenen J.G."/>
            <person name="Konings W.N."/>
        </authorList>
    </citation>
    <scope>SUBSTRATE SPECIFICITY</scope>
    <scope>ACTIVITY REGULATION</scope>
    <source>
        <strain>DSM 15147 / CIP 104769 / NCIMB 8539 / c2 / X</strain>
    </source>
</reference>
<reference key="3">
    <citation type="journal article" date="2019" name="Nat. Microbiol.">
        <title>DABs are inorganic carbon pumps found throughout prokaryotic phyla.</title>
        <authorList>
            <person name="Desmarais J.J."/>
            <person name="Flamholz A.I."/>
            <person name="Blikstad C."/>
            <person name="Dugan E.J."/>
            <person name="Laughlin T.G."/>
            <person name="Oltrogge L.M."/>
            <person name="Chen A.W."/>
            <person name="Wetmore K."/>
            <person name="Diamond S."/>
            <person name="Wang J.Y."/>
            <person name="Savage D.F."/>
        </authorList>
    </citation>
    <scope>FUNCTION</scope>
    <scope>EXPRESSION IN ECOLI</scope>
    <scope>ACTIVITY REGULATION</scope>
    <scope>SUBUNIT</scope>
    <scope>SUBCELLULAR LOCATION</scope>
    <scope>DISRUPTION PHENOTYPE</scope>
    <source>
        <strain>ATCC 23641 / c2</strain>
    </source>
</reference>
<keyword id="KW-0997">Cell inner membrane</keyword>
<keyword id="KW-1003">Cell membrane</keyword>
<keyword id="KW-0472">Membrane</keyword>
<keyword id="KW-1185">Reference proteome</keyword>
<keyword id="KW-0812">Transmembrane</keyword>
<keyword id="KW-1133">Transmembrane helix</keyword>
<keyword id="KW-0813">Transport</keyword>
<accession>D0KWS8</accession>
<comment type="function">
    <text evidence="2 6">Part of an energy-coupled inorganic carbon pump; its substrate may be carbon dioxide. Expression of both dabA2 and dabB2 (DAB2) restores growth in ambient air to E.coli deleted of its carbonic anhydrase genes (called CAfree, deletion of 'can' and 'cynT'); neither dabA2 or dabB2 alone is sufficient. Rescue is pH-independent, suggesting it transports CO(2) and not carbonate ions. Together the genes allow greater than normal uptake of inorganic carbon by E.coli (PubMed:31406332). Uptake of carbon dioxide rather than bicarbonate has been suggested based on kinetic calculations (Probable).</text>
</comment>
<comment type="activity regulation">
    <text evidence="2 3">Uptake of inorganic carbon by cells in the presence of thiosulphate is fully inhibited by the uncouplers carbonyl cyanide m-chlorophenyl hydrazone (CCCP), carbonyl cyanide p-trifluoromethoxyphenyl hydrazone (FCCP), S13 or SF6847. Not inhibited by the ATPase inhibitor N,N-dicyclohexylcarbodiimide (DCCD) (Ref.2). Inorganic carbon uptake is inhibited by the ionophore carbonyl cyanide m-chlorophenyl hydrazone (CCCP), suggesting uptake is coupled to a cation gradient (PubMed:31406332).</text>
</comment>
<comment type="subunit">
    <text evidence="2">Forms a complex with DabA2, possibly a heterodimer.</text>
</comment>
<comment type="subcellular location">
    <subcellularLocation>
        <location evidence="1 5">Cell inner membrane</location>
        <topology evidence="1">Multi-pass membrane protein</topology>
    </subcellularLocation>
</comment>
<comment type="disruption phenotype">
    <text evidence="2">Required for growth in ambient air.</text>
</comment>
<comment type="similarity">
    <text evidence="1">Belongs to the inorganic carbon transporter (TC 9.A.2) DabB family.</text>
</comment>
<gene>
    <name evidence="4" type="primary">dabB2</name>
    <name evidence="7" type="ordered locus">Hneap_0212</name>
</gene>
<protein>
    <recommendedName>
        <fullName evidence="5">Probable inorganic carbon transporter subunit DabB2</fullName>
    </recommendedName>
</protein>
<name>DABB2_HALNC</name>
<organism>
    <name type="scientific">Halothiobacillus neapolitanus (strain ATCC 23641 / c2)</name>
    <name type="common">Thiobacillus neapolitanus</name>
    <dbReference type="NCBI Taxonomy" id="555778"/>
    <lineage>
        <taxon>Bacteria</taxon>
        <taxon>Pseudomonadati</taxon>
        <taxon>Pseudomonadota</taxon>
        <taxon>Gammaproteobacteria</taxon>
        <taxon>Chromatiales</taxon>
        <taxon>Halothiobacillaceae</taxon>
        <taxon>Halothiobacillus</taxon>
    </lineage>
</organism>
<proteinExistence type="evidence at protein level"/>
<evidence type="ECO:0000255" key="1">
    <source>
        <dbReference type="HAMAP-Rule" id="MF_00862"/>
    </source>
</evidence>
<evidence type="ECO:0000269" key="2">
    <source>
    </source>
</evidence>
<evidence type="ECO:0000269" key="3">
    <source ref="2"/>
</evidence>
<evidence type="ECO:0000303" key="4">
    <source>
    </source>
</evidence>
<evidence type="ECO:0000305" key="5">
    <source>
    </source>
</evidence>
<evidence type="ECO:0000305" key="6">
    <source ref="2"/>
</evidence>
<evidence type="ECO:0000312" key="7">
    <source>
        <dbReference type="EMBL" id="ACX95075.1"/>
    </source>
</evidence>
<feature type="chain" id="PRO_0000453157" description="Probable inorganic carbon transporter subunit DabB2">
    <location>
        <begin position="1"/>
        <end position="551"/>
    </location>
</feature>
<feature type="transmembrane region" description="Helical" evidence="1">
    <location>
        <begin position="6"/>
        <end position="26"/>
    </location>
</feature>
<feature type="transmembrane region" description="Helical" evidence="1">
    <location>
        <begin position="42"/>
        <end position="62"/>
    </location>
</feature>
<feature type="transmembrane region" description="Helical" evidence="1">
    <location>
        <begin position="65"/>
        <end position="85"/>
    </location>
</feature>
<feature type="transmembrane region" description="Helical" evidence="1">
    <location>
        <begin position="86"/>
        <end position="106"/>
    </location>
</feature>
<feature type="transmembrane region" description="Helical" evidence="1">
    <location>
        <begin position="132"/>
        <end position="152"/>
    </location>
</feature>
<feature type="transmembrane region" description="Helical" evidence="1">
    <location>
        <begin position="187"/>
        <end position="207"/>
    </location>
</feature>
<feature type="transmembrane region" description="Helical" evidence="1">
    <location>
        <begin position="217"/>
        <end position="237"/>
    </location>
</feature>
<feature type="transmembrane region" description="Helical" evidence="1">
    <location>
        <begin position="252"/>
        <end position="272"/>
    </location>
</feature>
<feature type="transmembrane region" description="Helical" evidence="1">
    <location>
        <begin position="284"/>
        <end position="304"/>
    </location>
</feature>
<feature type="transmembrane region" description="Helical" evidence="1">
    <location>
        <begin position="321"/>
        <end position="341"/>
    </location>
</feature>
<feature type="transmembrane region" description="Helical" evidence="1">
    <location>
        <begin position="374"/>
        <end position="394"/>
    </location>
</feature>
<feature type="transmembrane region" description="Helical" evidence="1">
    <location>
        <begin position="404"/>
        <end position="424"/>
    </location>
</feature>
<feature type="transmembrane region" description="Helical" evidence="1">
    <location>
        <begin position="434"/>
        <end position="454"/>
    </location>
</feature>
<feature type="transmembrane region" description="Helical" evidence="1">
    <location>
        <begin position="469"/>
        <end position="489"/>
    </location>
</feature>
<dbReference type="EMBL" id="CP001801">
    <property type="protein sequence ID" value="ACX95075.1"/>
    <property type="molecule type" value="Genomic_DNA"/>
</dbReference>
<dbReference type="RefSeq" id="WP_012823111.1">
    <property type="nucleotide sequence ID" value="NC_013422.1"/>
</dbReference>
<dbReference type="SMR" id="D0KWS8"/>
<dbReference type="STRING" id="555778.Hneap_0212"/>
<dbReference type="TCDB" id="9.A.2.1.2">
    <property type="family name" value="the putative dissolved inorganic carbon concentrating transporter (dic-ct) family"/>
</dbReference>
<dbReference type="KEGG" id="hna:Hneap_0212"/>
<dbReference type="eggNOG" id="COG1009">
    <property type="taxonomic scope" value="Bacteria"/>
</dbReference>
<dbReference type="HOGENOM" id="CLU_007100_11_1_6"/>
<dbReference type="OrthoDB" id="9811798at2"/>
<dbReference type="Proteomes" id="UP000009102">
    <property type="component" value="Chromosome"/>
</dbReference>
<dbReference type="GO" id="GO:0005886">
    <property type="term" value="C:plasma membrane"/>
    <property type="evidence" value="ECO:0007669"/>
    <property type="project" value="UniProtKB-SubCell"/>
</dbReference>
<dbReference type="GO" id="GO:0008137">
    <property type="term" value="F:NADH dehydrogenase (ubiquinone) activity"/>
    <property type="evidence" value="ECO:0007669"/>
    <property type="project" value="InterPro"/>
</dbReference>
<dbReference type="GO" id="GO:0042773">
    <property type="term" value="P:ATP synthesis coupled electron transport"/>
    <property type="evidence" value="ECO:0007669"/>
    <property type="project" value="InterPro"/>
</dbReference>
<dbReference type="GO" id="GO:0015990">
    <property type="term" value="P:electron transport coupled proton transport"/>
    <property type="evidence" value="ECO:0007669"/>
    <property type="project" value="TreeGrafter"/>
</dbReference>
<dbReference type="HAMAP" id="MF_00862">
    <property type="entry name" value="DabB"/>
    <property type="match status" value="1"/>
</dbReference>
<dbReference type="InterPro" id="IPR001750">
    <property type="entry name" value="ND/Mrp_TM"/>
</dbReference>
<dbReference type="InterPro" id="IPR003945">
    <property type="entry name" value="NU5C-like"/>
</dbReference>
<dbReference type="InterPro" id="IPR001516">
    <property type="entry name" value="Proton_antipo_N"/>
</dbReference>
<dbReference type="InterPro" id="IPR046396">
    <property type="entry name" value="Transporter_DabB"/>
</dbReference>
<dbReference type="NCBIfam" id="NF006029">
    <property type="entry name" value="PRK08168.1"/>
    <property type="match status" value="1"/>
</dbReference>
<dbReference type="PANTHER" id="PTHR42829:SF1">
    <property type="entry name" value="INORGANIC CARBON TRANSPORTER SUBUNIT DABB-RELATED"/>
    <property type="match status" value="1"/>
</dbReference>
<dbReference type="PANTHER" id="PTHR42829">
    <property type="entry name" value="NADH-UBIQUINONE OXIDOREDUCTASE CHAIN 5"/>
    <property type="match status" value="1"/>
</dbReference>
<dbReference type="Pfam" id="PF00361">
    <property type="entry name" value="Proton_antipo_M"/>
    <property type="match status" value="1"/>
</dbReference>
<dbReference type="Pfam" id="PF00662">
    <property type="entry name" value="Proton_antipo_N"/>
    <property type="match status" value="1"/>
</dbReference>
<dbReference type="PRINTS" id="PR01434">
    <property type="entry name" value="NADHDHGNASE5"/>
</dbReference>
<sequence length="551" mass="59136">MTIEFSHTTGLLLLAMPALLLMAAVIKPKQGAAYARAYRQRVQWTSFAAFGLALLAVVSFLFARQQNLMLGAGSLPAGLGLLALSIQVNGLTLVLASLVSFVLSVIARYSVQYLDGDPQQARFFRLLAVTGGFFLLVVISGNLGLFTLAIIATGFGLHRLLSFYADRPRAIMATHKKSIFSRTADALLLAATVLIGHQIGSLEFSQISAYVHAQDHLSIALHVAAWLIVLAAILKSAQFPFHGWLIQVMEAPTPVSALMHAGVVYSGAIIVLRTSELLAADGTALLLLALIGLMTLAIGSLVMLTQSAIKSSLAWSTAAQLGFMMLELGLGLFGLALLHLVGHSLYKAHAFLSSGSMTDHLRQAKVLKNRPISVVAWFTTVIVSGLFTLGIAAAMGLSIDQEPMLPAVLTIIALATAQLMLKALSHGTWREILVAAGAAIAMTGVYVFLHEVFITGFADTLAATPQRAPLLDLLLMAITIITFLFVAWLQGPGKTLMSPERQFALFVHLNNGLYLDRWVERLAFRFWPEKVGRAPKKSCAVIPPNPSGIEP</sequence>